<protein>
    <recommendedName>
        <fullName evidence="1">3-octaprenyl-4-hydroxybenzoate carboxy-lyase</fullName>
        <ecNumber evidence="1">4.1.1.98</ecNumber>
    </recommendedName>
    <alternativeName>
        <fullName evidence="1">Polyprenyl p-hydroxybenzoate decarboxylase</fullName>
    </alternativeName>
</protein>
<name>UBID_SHEPC</name>
<proteinExistence type="inferred from homology"/>
<accession>A4YAT1</accession>
<reference key="1">
    <citation type="submission" date="2007-04" db="EMBL/GenBank/DDBJ databases">
        <title>Complete sequence of Shewanella putrefaciens CN-32.</title>
        <authorList>
            <consortium name="US DOE Joint Genome Institute"/>
            <person name="Copeland A."/>
            <person name="Lucas S."/>
            <person name="Lapidus A."/>
            <person name="Barry K."/>
            <person name="Detter J.C."/>
            <person name="Glavina del Rio T."/>
            <person name="Hammon N."/>
            <person name="Israni S."/>
            <person name="Dalin E."/>
            <person name="Tice H."/>
            <person name="Pitluck S."/>
            <person name="Chain P."/>
            <person name="Malfatti S."/>
            <person name="Shin M."/>
            <person name="Vergez L."/>
            <person name="Schmutz J."/>
            <person name="Larimer F."/>
            <person name="Land M."/>
            <person name="Hauser L."/>
            <person name="Kyrpides N."/>
            <person name="Mikhailova N."/>
            <person name="Romine M.F."/>
            <person name="Fredrickson J."/>
            <person name="Tiedje J."/>
            <person name="Richardson P."/>
        </authorList>
    </citation>
    <scope>NUCLEOTIDE SEQUENCE [LARGE SCALE GENOMIC DNA]</scope>
    <source>
        <strain>CN-32 / ATCC BAA-453</strain>
    </source>
</reference>
<evidence type="ECO:0000255" key="1">
    <source>
        <dbReference type="HAMAP-Rule" id="MF_01636"/>
    </source>
</evidence>
<gene>
    <name evidence="1" type="primary">ubiD</name>
    <name type="ordered locus">Sputcn32_3352</name>
</gene>
<sequence length="493" mass="55626">MSFKDLRSFIDHLEANGELKRISYPVDPHLEMTEIADRVLRAKGPALLFENPKNHHMPVLANLFGTPKRVAMALGKDDPLALREVGELLAFLKEPEPPRGFKDAIAKIPMFKQALNMPPKTVRNPPCQQIIKTGDEVDLTQLPIQHCWPGDVAPLVTWGLTITKGPRKSRQNLGIYRQQLLGKNKLIMRWLSHRGGALDFADFKEQFPGERYPVVVALGADPVTILGAVTPVPDSMSEYAFAGLLRGERTEVCKALSCDLEVPATSEIILEGYIDPEELAEEGPYGDHTGYYNETDKFPVFTVTHITQRKDAIYHSTYTGRPPDEPAMLGVALNEVFVPILRKQYPEIVDFYLPPEGCSYRMAVISIRKQYPGHAKRVMMGAWSFLRQFMYTKFIVIVDEDVNCRDWQDVIWAITTRMDPKRDTVMIENTPIDYLDFASPVAGLGSKMGLDATNKWEGETNREWGTPIVMDPKVKQKIDSIWDELGIDDSPTL</sequence>
<comment type="function">
    <text evidence="1">Catalyzes the decarboxylation of 3-octaprenyl-4-hydroxy benzoate to 2-octaprenylphenol, an intermediate step in ubiquinone biosynthesis.</text>
</comment>
<comment type="catalytic activity">
    <reaction evidence="1">
        <text>a 4-hydroxy-3-(all-trans-polyprenyl)benzoate + H(+) = a 2-(all-trans-polyprenyl)phenol + CO2</text>
        <dbReference type="Rhea" id="RHEA:41680"/>
        <dbReference type="Rhea" id="RHEA-COMP:9514"/>
        <dbReference type="Rhea" id="RHEA-COMP:9516"/>
        <dbReference type="ChEBI" id="CHEBI:1269"/>
        <dbReference type="ChEBI" id="CHEBI:15378"/>
        <dbReference type="ChEBI" id="CHEBI:16526"/>
        <dbReference type="ChEBI" id="CHEBI:78396"/>
        <dbReference type="EC" id="4.1.1.98"/>
    </reaction>
</comment>
<comment type="cofactor">
    <cofactor evidence="1">
        <name>prenylated FMN</name>
        <dbReference type="ChEBI" id="CHEBI:87746"/>
    </cofactor>
    <text evidence="1">Binds 1 prenylated FMN per subunit.</text>
</comment>
<comment type="cofactor">
    <cofactor evidence="1">
        <name>Mn(2+)</name>
        <dbReference type="ChEBI" id="CHEBI:29035"/>
    </cofactor>
</comment>
<comment type="pathway">
    <text evidence="1">Cofactor biosynthesis; ubiquinone biosynthesis.</text>
</comment>
<comment type="subunit">
    <text evidence="1">Homohexamer.</text>
</comment>
<comment type="subcellular location">
    <subcellularLocation>
        <location evidence="1">Cell membrane</location>
        <topology evidence="1">Peripheral membrane protein</topology>
    </subcellularLocation>
</comment>
<comment type="similarity">
    <text evidence="1">Belongs to the UbiD family.</text>
</comment>
<feature type="chain" id="PRO_1000069863" description="3-octaprenyl-4-hydroxybenzoate carboxy-lyase">
    <location>
        <begin position="1"/>
        <end position="493"/>
    </location>
</feature>
<feature type="active site" description="Proton donor" evidence="1">
    <location>
        <position position="287"/>
    </location>
</feature>
<feature type="binding site" evidence="1">
    <location>
        <position position="172"/>
    </location>
    <ligand>
        <name>Mn(2+)</name>
        <dbReference type="ChEBI" id="CHEBI:29035"/>
    </ligand>
</feature>
<feature type="binding site" evidence="1">
    <location>
        <begin position="175"/>
        <end position="177"/>
    </location>
    <ligand>
        <name>prenylated FMN</name>
        <dbReference type="ChEBI" id="CHEBI:87746"/>
    </ligand>
</feature>
<feature type="binding site" evidence="1">
    <location>
        <begin position="189"/>
        <end position="191"/>
    </location>
    <ligand>
        <name>prenylated FMN</name>
        <dbReference type="ChEBI" id="CHEBI:87746"/>
    </ligand>
</feature>
<feature type="binding site" evidence="1">
    <location>
        <begin position="194"/>
        <end position="195"/>
    </location>
    <ligand>
        <name>prenylated FMN</name>
        <dbReference type="ChEBI" id="CHEBI:87746"/>
    </ligand>
</feature>
<feature type="binding site" evidence="1">
    <location>
        <position position="238"/>
    </location>
    <ligand>
        <name>Mn(2+)</name>
        <dbReference type="ChEBI" id="CHEBI:29035"/>
    </ligand>
</feature>
<organism>
    <name type="scientific">Shewanella putrefaciens (strain CN-32 / ATCC BAA-453)</name>
    <dbReference type="NCBI Taxonomy" id="319224"/>
    <lineage>
        <taxon>Bacteria</taxon>
        <taxon>Pseudomonadati</taxon>
        <taxon>Pseudomonadota</taxon>
        <taxon>Gammaproteobacteria</taxon>
        <taxon>Alteromonadales</taxon>
        <taxon>Shewanellaceae</taxon>
        <taxon>Shewanella</taxon>
    </lineage>
</organism>
<keyword id="KW-1003">Cell membrane</keyword>
<keyword id="KW-0210">Decarboxylase</keyword>
<keyword id="KW-0285">Flavoprotein</keyword>
<keyword id="KW-0288">FMN</keyword>
<keyword id="KW-0456">Lyase</keyword>
<keyword id="KW-0464">Manganese</keyword>
<keyword id="KW-0472">Membrane</keyword>
<keyword id="KW-0479">Metal-binding</keyword>
<keyword id="KW-0831">Ubiquinone biosynthesis</keyword>
<dbReference type="EC" id="4.1.1.98" evidence="1"/>
<dbReference type="EMBL" id="CP000681">
    <property type="protein sequence ID" value="ABP77064.1"/>
    <property type="molecule type" value="Genomic_DNA"/>
</dbReference>
<dbReference type="SMR" id="A4YAT1"/>
<dbReference type="STRING" id="319224.Sputcn32_3352"/>
<dbReference type="KEGG" id="spc:Sputcn32_3352"/>
<dbReference type="eggNOG" id="COG0043">
    <property type="taxonomic scope" value="Bacteria"/>
</dbReference>
<dbReference type="HOGENOM" id="CLU_023348_4_1_6"/>
<dbReference type="UniPathway" id="UPA00232"/>
<dbReference type="GO" id="GO:0005829">
    <property type="term" value="C:cytosol"/>
    <property type="evidence" value="ECO:0007669"/>
    <property type="project" value="TreeGrafter"/>
</dbReference>
<dbReference type="GO" id="GO:0005886">
    <property type="term" value="C:plasma membrane"/>
    <property type="evidence" value="ECO:0007669"/>
    <property type="project" value="UniProtKB-SubCell"/>
</dbReference>
<dbReference type="GO" id="GO:0008694">
    <property type="term" value="F:3-octaprenyl-4-hydroxybenzoate carboxy-lyase activity"/>
    <property type="evidence" value="ECO:0007669"/>
    <property type="project" value="UniProtKB-UniRule"/>
</dbReference>
<dbReference type="GO" id="GO:0046872">
    <property type="term" value="F:metal ion binding"/>
    <property type="evidence" value="ECO:0007669"/>
    <property type="project" value="UniProtKB-KW"/>
</dbReference>
<dbReference type="GO" id="GO:0006744">
    <property type="term" value="P:ubiquinone biosynthetic process"/>
    <property type="evidence" value="ECO:0007669"/>
    <property type="project" value="UniProtKB-UniRule"/>
</dbReference>
<dbReference type="FunFam" id="1.20.5.570:FF:000001">
    <property type="entry name" value="3-octaprenyl-4-hydroxybenzoate carboxy-lyase"/>
    <property type="match status" value="1"/>
</dbReference>
<dbReference type="FunFam" id="3.40.1670.10:FF:000001">
    <property type="entry name" value="3-octaprenyl-4-hydroxybenzoate carboxy-lyase"/>
    <property type="match status" value="1"/>
</dbReference>
<dbReference type="Gene3D" id="1.20.5.570">
    <property type="entry name" value="Single helix bin"/>
    <property type="match status" value="1"/>
</dbReference>
<dbReference type="Gene3D" id="3.40.1670.10">
    <property type="entry name" value="UbiD C-terminal domain-like"/>
    <property type="match status" value="1"/>
</dbReference>
<dbReference type="HAMAP" id="MF_01636">
    <property type="entry name" value="UbiD"/>
    <property type="match status" value="1"/>
</dbReference>
<dbReference type="InterPro" id="IPR002830">
    <property type="entry name" value="UbiD"/>
</dbReference>
<dbReference type="InterPro" id="IPR049381">
    <property type="entry name" value="UbiD-like_C"/>
</dbReference>
<dbReference type="InterPro" id="IPR049383">
    <property type="entry name" value="UbiD-like_N"/>
</dbReference>
<dbReference type="InterPro" id="IPR023677">
    <property type="entry name" value="UbiD_bacteria"/>
</dbReference>
<dbReference type="InterPro" id="IPR048304">
    <property type="entry name" value="UbiD_Rift_dom"/>
</dbReference>
<dbReference type="NCBIfam" id="NF008175">
    <property type="entry name" value="PRK10922.1"/>
    <property type="match status" value="1"/>
</dbReference>
<dbReference type="NCBIfam" id="TIGR00148">
    <property type="entry name" value="UbiD family decarboxylase"/>
    <property type="match status" value="1"/>
</dbReference>
<dbReference type="PANTHER" id="PTHR30108">
    <property type="entry name" value="3-OCTAPRENYL-4-HYDROXYBENZOATE CARBOXY-LYASE-RELATED"/>
    <property type="match status" value="1"/>
</dbReference>
<dbReference type="PANTHER" id="PTHR30108:SF17">
    <property type="entry name" value="FERULIC ACID DECARBOXYLASE 1"/>
    <property type="match status" value="1"/>
</dbReference>
<dbReference type="Pfam" id="PF01977">
    <property type="entry name" value="UbiD"/>
    <property type="match status" value="1"/>
</dbReference>
<dbReference type="Pfam" id="PF20696">
    <property type="entry name" value="UbiD_C"/>
    <property type="match status" value="1"/>
</dbReference>
<dbReference type="Pfam" id="PF20695">
    <property type="entry name" value="UbiD_N"/>
    <property type="match status" value="1"/>
</dbReference>
<dbReference type="SUPFAM" id="SSF50475">
    <property type="entry name" value="FMN-binding split barrel"/>
    <property type="match status" value="1"/>
</dbReference>
<dbReference type="SUPFAM" id="SSF143968">
    <property type="entry name" value="UbiD C-terminal domain-like"/>
    <property type="match status" value="1"/>
</dbReference>